<keyword id="KW-0007">Acetylation</keyword>
<keyword id="KW-0458">Lysosome</keyword>
<keyword id="KW-0472">Membrane</keyword>
<keyword id="KW-1185">Reference proteome</keyword>
<organism>
    <name type="scientific">Rattus norvegicus</name>
    <name type="common">Rat</name>
    <dbReference type="NCBI Taxonomy" id="10116"/>
    <lineage>
        <taxon>Eukaryota</taxon>
        <taxon>Metazoa</taxon>
        <taxon>Chordata</taxon>
        <taxon>Craniata</taxon>
        <taxon>Vertebrata</taxon>
        <taxon>Euteleostomi</taxon>
        <taxon>Mammalia</taxon>
        <taxon>Eutheria</taxon>
        <taxon>Euarchontoglires</taxon>
        <taxon>Glires</taxon>
        <taxon>Rodentia</taxon>
        <taxon>Myomorpha</taxon>
        <taxon>Muroidea</taxon>
        <taxon>Muridae</taxon>
        <taxon>Murinae</taxon>
        <taxon>Rattus</taxon>
    </lineage>
</organism>
<accession>Q5M853</accession>
<gene>
    <name type="primary">Kxd1</name>
</gene>
<comment type="function">
    <text evidence="1 2">As part of the BORC complex may play a role in lysosomes movement and localization at the cell periphery. Associated with the cytosolic face of lysosomes, the BORC complex may recruit ARL8B and couple lysosomes to microtubule plus-end-directed kinesin motor. May also be involved in the biogenesis of lysosome-related organelles such as melanosomes.</text>
</comment>
<comment type="subunit">
    <text evidence="1 2">Component of the BLOC-one-related complex (BORC) which is composed of BLOC1S1, BLOC1S2, BORCS5, BORCS6, BORCS7, BORCS8, KXD1 and SNAPIN. Associates with the BLOC-1 complex. Interacts with BLOC1S1. Interacts with DTNBP1/BLOC1S7 (via coiled-coil domain).</text>
</comment>
<comment type="subcellular location">
    <subcellularLocation>
        <location evidence="2">Lysosome membrane</location>
    </subcellularLocation>
</comment>
<comment type="similarity">
    <text evidence="4">Belongs to the KXD1 family.</text>
</comment>
<sequence>MDTPDSASRVFCGRFLSMVNTDDVNAIILAQKNMLDRFEKTNEMLLNFNNLSSVRLQQMSERFMHHTRTLVDMKRDLDSIFRRIRTLKGKLARQHPEAFSHIPEGSLLEDEDEDPVPPSITTTIATSEQSTGSCDTSPDTASPSFSPGFEDLSHIRPGSPAINGHSQTDDEEETREE</sequence>
<evidence type="ECO:0000250" key="1">
    <source>
        <dbReference type="UniProtKB" id="Q80XH1"/>
    </source>
</evidence>
<evidence type="ECO:0000250" key="2">
    <source>
        <dbReference type="UniProtKB" id="Q9BQD3"/>
    </source>
</evidence>
<evidence type="ECO:0000256" key="3">
    <source>
        <dbReference type="SAM" id="MobiDB-lite"/>
    </source>
</evidence>
<evidence type="ECO:0000305" key="4"/>
<reference key="1">
    <citation type="journal article" date="2004" name="Genome Res.">
        <title>The status, quality, and expansion of the NIH full-length cDNA project: the Mammalian Gene Collection (MGC).</title>
        <authorList>
            <consortium name="The MGC Project Team"/>
        </authorList>
    </citation>
    <scope>NUCLEOTIDE SEQUENCE [LARGE SCALE MRNA]</scope>
    <source>
        <tissue>Thymus</tissue>
    </source>
</reference>
<reference key="2">
    <citation type="journal article" date="2012" name="Nat. Commun.">
        <title>Quantitative maps of protein phosphorylation sites across 14 different rat organs and tissues.</title>
        <authorList>
            <person name="Lundby A."/>
            <person name="Secher A."/>
            <person name="Lage K."/>
            <person name="Nordsborg N.B."/>
            <person name="Dmytriyev A."/>
            <person name="Lundby C."/>
            <person name="Olsen J.V."/>
        </authorList>
    </citation>
    <scope>IDENTIFICATION BY MASS SPECTROMETRY [LARGE SCALE ANALYSIS]</scope>
</reference>
<protein>
    <recommendedName>
        <fullName>KxDL motif-containing protein 1</fullName>
    </recommendedName>
</protein>
<proteinExistence type="evidence at protein level"/>
<name>KXDL1_RAT</name>
<feature type="chain" id="PRO_0000295261" description="KxDL motif-containing protein 1">
    <location>
        <begin position="1"/>
        <end position="177"/>
    </location>
</feature>
<feature type="region of interest" description="Disordered" evidence="3">
    <location>
        <begin position="92"/>
        <end position="177"/>
    </location>
</feature>
<feature type="compositionally biased region" description="Polar residues" evidence="3">
    <location>
        <begin position="119"/>
        <end position="145"/>
    </location>
</feature>
<feature type="modified residue" description="N-acetylmethionine" evidence="2">
    <location>
        <position position="1"/>
    </location>
</feature>
<dbReference type="EMBL" id="BC088216">
    <property type="protein sequence ID" value="AAH88216.1"/>
    <property type="molecule type" value="mRNA"/>
</dbReference>
<dbReference type="RefSeq" id="NP_001020314.1">
    <property type="nucleotide sequence ID" value="NM_001025143.1"/>
</dbReference>
<dbReference type="RefSeq" id="XP_006252985.1">
    <property type="nucleotide sequence ID" value="XM_006252923.5"/>
</dbReference>
<dbReference type="RefSeq" id="XP_006252986.1">
    <property type="nucleotide sequence ID" value="XM_006252924.3"/>
</dbReference>
<dbReference type="RefSeq" id="XP_038950693.1">
    <property type="nucleotide sequence ID" value="XM_039094765.1"/>
</dbReference>
<dbReference type="SMR" id="Q5M853"/>
<dbReference type="FunCoup" id="Q5M853">
    <property type="interactions" value="1278"/>
</dbReference>
<dbReference type="STRING" id="10116.ENSRNOP00000027053"/>
<dbReference type="iPTMnet" id="Q5M853"/>
<dbReference type="PhosphoSitePlus" id="Q5M853"/>
<dbReference type="PaxDb" id="10116-ENSRNOP00000027053"/>
<dbReference type="GeneID" id="498606"/>
<dbReference type="KEGG" id="rno:498606"/>
<dbReference type="UCSC" id="RGD:1562866">
    <property type="organism name" value="rat"/>
</dbReference>
<dbReference type="AGR" id="RGD:1562866"/>
<dbReference type="CTD" id="79036"/>
<dbReference type="RGD" id="1562866">
    <property type="gene designation" value="Kxd1"/>
</dbReference>
<dbReference type="VEuPathDB" id="HostDB:ENSRNOG00000019971"/>
<dbReference type="eggNOG" id="KOG3443">
    <property type="taxonomic scope" value="Eukaryota"/>
</dbReference>
<dbReference type="HOGENOM" id="CLU_094353_3_0_1"/>
<dbReference type="InParanoid" id="Q5M853"/>
<dbReference type="PhylomeDB" id="Q5M853"/>
<dbReference type="TreeFam" id="TF319035"/>
<dbReference type="PRO" id="PR:Q5M853"/>
<dbReference type="Proteomes" id="UP000002494">
    <property type="component" value="Chromosome 16"/>
</dbReference>
<dbReference type="Bgee" id="ENSRNOG00000019971">
    <property type="expression patterns" value="Expressed in ovary and 20 other cell types or tissues"/>
</dbReference>
<dbReference type="GO" id="GO:0031083">
    <property type="term" value="C:BLOC-1 complex"/>
    <property type="evidence" value="ECO:0000266"/>
    <property type="project" value="RGD"/>
</dbReference>
<dbReference type="GO" id="GO:0099078">
    <property type="term" value="C:BORC complex"/>
    <property type="evidence" value="ECO:0000250"/>
    <property type="project" value="UniProtKB"/>
</dbReference>
<dbReference type="GO" id="GO:0005765">
    <property type="term" value="C:lysosomal membrane"/>
    <property type="evidence" value="ECO:0007669"/>
    <property type="project" value="UniProtKB-SubCell"/>
</dbReference>
<dbReference type="GO" id="GO:0032418">
    <property type="term" value="P:lysosome localization"/>
    <property type="evidence" value="ECO:0000250"/>
    <property type="project" value="UniProtKB"/>
</dbReference>
<dbReference type="GO" id="GO:0016192">
    <property type="term" value="P:vesicle-mediated transport"/>
    <property type="evidence" value="ECO:0000250"/>
    <property type="project" value="UniProtKB"/>
</dbReference>
<dbReference type="InterPro" id="IPR039843">
    <property type="entry name" value="KXD1-like"/>
</dbReference>
<dbReference type="InterPro" id="IPR019371">
    <property type="entry name" value="KxDL_dom"/>
</dbReference>
<dbReference type="PANTHER" id="PTHR13511">
    <property type="entry name" value="KXDL MOTIF-CONTAINING PROTEIN 1"/>
    <property type="match status" value="1"/>
</dbReference>
<dbReference type="PANTHER" id="PTHR13511:SF0">
    <property type="entry name" value="KXDL MOTIF-CONTAINING PROTEIN 1"/>
    <property type="match status" value="1"/>
</dbReference>
<dbReference type="Pfam" id="PF10241">
    <property type="entry name" value="KxDL"/>
    <property type="match status" value="1"/>
</dbReference>